<keyword id="KW-1185">Reference proteome</keyword>
<protein>
    <recommendedName>
        <fullName>Uncharacterized PPE family protein PPE19</fullName>
    </recommendedName>
</protein>
<dbReference type="EMBL" id="AE000516">
    <property type="protein sequence ID" value="AAK45669.1"/>
    <property type="molecule type" value="Genomic_DNA"/>
</dbReference>
<dbReference type="PIR" id="H70741">
    <property type="entry name" value="H70741"/>
</dbReference>
<dbReference type="RefSeq" id="WP_003898843.1">
    <property type="nucleotide sequence ID" value="NZ_KK341227.1"/>
</dbReference>
<dbReference type="SMR" id="P9WI24"/>
<dbReference type="KEGG" id="mtc:MT1406"/>
<dbReference type="PATRIC" id="fig|83331.31.peg.1513"/>
<dbReference type="HOGENOM" id="CLU_000243_0_0_11"/>
<dbReference type="Proteomes" id="UP000001020">
    <property type="component" value="Chromosome"/>
</dbReference>
<dbReference type="GO" id="GO:0052572">
    <property type="term" value="P:response to host immune response"/>
    <property type="evidence" value="ECO:0007669"/>
    <property type="project" value="TreeGrafter"/>
</dbReference>
<dbReference type="FunFam" id="1.20.1260.20:FF:000001">
    <property type="entry name" value="PPE family protein PPE41"/>
    <property type="match status" value="1"/>
</dbReference>
<dbReference type="Gene3D" id="1.20.1260.20">
    <property type="entry name" value="PPE superfamily"/>
    <property type="match status" value="1"/>
</dbReference>
<dbReference type="InterPro" id="IPR022171">
    <property type="entry name" value="PPE_C"/>
</dbReference>
<dbReference type="InterPro" id="IPR000030">
    <property type="entry name" value="PPE_dom"/>
</dbReference>
<dbReference type="InterPro" id="IPR038332">
    <property type="entry name" value="PPE_sf"/>
</dbReference>
<dbReference type="PANTHER" id="PTHR46766">
    <property type="entry name" value="GLUTAMINE-RICH PROTEIN 2"/>
    <property type="match status" value="1"/>
</dbReference>
<dbReference type="PANTHER" id="PTHR46766:SF1">
    <property type="entry name" value="GLUTAMINE-RICH PROTEIN 2"/>
    <property type="match status" value="1"/>
</dbReference>
<dbReference type="Pfam" id="PF00823">
    <property type="entry name" value="PPE"/>
    <property type="match status" value="1"/>
</dbReference>
<dbReference type="Pfam" id="PF12484">
    <property type="entry name" value="PPE-SVP"/>
    <property type="match status" value="1"/>
</dbReference>
<dbReference type="SUPFAM" id="SSF140459">
    <property type="entry name" value="PE/PPE dimer-like"/>
    <property type="match status" value="1"/>
</dbReference>
<gene>
    <name type="primary">PPE19</name>
    <name type="ordered locus">MT1406</name>
</gene>
<name>PPE19_MYCTO</name>
<feature type="chain" id="PRO_0000428081" description="Uncharacterized PPE family protein PPE19">
    <location>
        <begin position="1"/>
        <end position="396"/>
    </location>
</feature>
<accession>P9WI24</accession>
<accession>L0T961</accession>
<accession>Q11031</accession>
<reference key="1">
    <citation type="journal article" date="2002" name="J. Bacteriol.">
        <title>Whole-genome comparison of Mycobacterium tuberculosis clinical and laboratory strains.</title>
        <authorList>
            <person name="Fleischmann R.D."/>
            <person name="Alland D."/>
            <person name="Eisen J.A."/>
            <person name="Carpenter L."/>
            <person name="White O."/>
            <person name="Peterson J.D."/>
            <person name="DeBoy R.T."/>
            <person name="Dodson R.J."/>
            <person name="Gwinn M.L."/>
            <person name="Haft D.H."/>
            <person name="Hickey E.K."/>
            <person name="Kolonay J.F."/>
            <person name="Nelson W.C."/>
            <person name="Umayam L.A."/>
            <person name="Ermolaeva M.D."/>
            <person name="Salzberg S.L."/>
            <person name="Delcher A."/>
            <person name="Utterback T.R."/>
            <person name="Weidman J.F."/>
            <person name="Khouri H.M."/>
            <person name="Gill J."/>
            <person name="Mikula A."/>
            <person name="Bishai W."/>
            <person name="Jacobs W.R. Jr."/>
            <person name="Venter J.C."/>
            <person name="Fraser C.M."/>
        </authorList>
    </citation>
    <scope>NUCLEOTIDE SEQUENCE [LARGE SCALE GENOMIC DNA]</scope>
    <source>
        <strain>CDC 1551 / Oshkosh</strain>
    </source>
</reference>
<evidence type="ECO:0000305" key="1"/>
<organism>
    <name type="scientific">Mycobacterium tuberculosis (strain CDC 1551 / Oshkosh)</name>
    <dbReference type="NCBI Taxonomy" id="83331"/>
    <lineage>
        <taxon>Bacteria</taxon>
        <taxon>Bacillati</taxon>
        <taxon>Actinomycetota</taxon>
        <taxon>Actinomycetes</taxon>
        <taxon>Mycobacteriales</taxon>
        <taxon>Mycobacteriaceae</taxon>
        <taxon>Mycobacterium</taxon>
        <taxon>Mycobacterium tuberculosis complex</taxon>
    </lineage>
</organism>
<comment type="similarity">
    <text evidence="1">Belongs to the mycobacterial PPE family.</text>
</comment>
<sequence>MVDFGALPPEINSARMYAGPGSASLVAAAKMWDSVASDLFSAASAFQSVVWGLTTGSWIGSSAGLMVAAASPYVAWMSVTAGQAELTAAQVRVAAAAYETAYGLTVPPPVIAENRAELMILIATNLLGQNTPAIAVNEAEYGEMWAQDAAAMFGYAAATATATEALLPFEDAPLITNPGGLLEQAVAVEEAIDTAAANQLMNNVPQALQQLAQPTKSIWPFDQLSELWKAISPHLSPLSNIVSMLNNHVSMTNSGVSMASTLHSMLKGFAPAAAQAVETAAQNGVQAMSSLGSQLGSSLGSSGLGAGVAANLGRAASVGSLSVPQAWAAANQAVTPAARALPLTSLTSAAQTAPGHMLGGLPLGQLTNSGGGFGGVSNALRMPPRAYVMPRVPAAG</sequence>
<proteinExistence type="inferred from homology"/>